<reference key="1">
    <citation type="journal article" date="2002" name="Nature">
        <title>The genome sequence of Schizosaccharomyces pombe.</title>
        <authorList>
            <person name="Wood V."/>
            <person name="Gwilliam R."/>
            <person name="Rajandream M.A."/>
            <person name="Lyne M.H."/>
            <person name="Lyne R."/>
            <person name="Stewart A."/>
            <person name="Sgouros J.G."/>
            <person name="Peat N."/>
            <person name="Hayles J."/>
            <person name="Baker S.G."/>
            <person name="Basham D."/>
            <person name="Bowman S."/>
            <person name="Brooks K."/>
            <person name="Brown D."/>
            <person name="Brown S."/>
            <person name="Chillingworth T."/>
            <person name="Churcher C.M."/>
            <person name="Collins M."/>
            <person name="Connor R."/>
            <person name="Cronin A."/>
            <person name="Davis P."/>
            <person name="Feltwell T."/>
            <person name="Fraser A."/>
            <person name="Gentles S."/>
            <person name="Goble A."/>
            <person name="Hamlin N."/>
            <person name="Harris D.E."/>
            <person name="Hidalgo J."/>
            <person name="Hodgson G."/>
            <person name="Holroyd S."/>
            <person name="Hornsby T."/>
            <person name="Howarth S."/>
            <person name="Huckle E.J."/>
            <person name="Hunt S."/>
            <person name="Jagels K."/>
            <person name="James K.D."/>
            <person name="Jones L."/>
            <person name="Jones M."/>
            <person name="Leather S."/>
            <person name="McDonald S."/>
            <person name="McLean J."/>
            <person name="Mooney P."/>
            <person name="Moule S."/>
            <person name="Mungall K.L."/>
            <person name="Murphy L.D."/>
            <person name="Niblett D."/>
            <person name="Odell C."/>
            <person name="Oliver K."/>
            <person name="O'Neil S."/>
            <person name="Pearson D."/>
            <person name="Quail M.A."/>
            <person name="Rabbinowitsch E."/>
            <person name="Rutherford K.M."/>
            <person name="Rutter S."/>
            <person name="Saunders D."/>
            <person name="Seeger K."/>
            <person name="Sharp S."/>
            <person name="Skelton J."/>
            <person name="Simmonds M.N."/>
            <person name="Squares R."/>
            <person name="Squares S."/>
            <person name="Stevens K."/>
            <person name="Taylor K."/>
            <person name="Taylor R.G."/>
            <person name="Tivey A."/>
            <person name="Walsh S.V."/>
            <person name="Warren T."/>
            <person name="Whitehead S."/>
            <person name="Woodward J.R."/>
            <person name="Volckaert G."/>
            <person name="Aert R."/>
            <person name="Robben J."/>
            <person name="Grymonprez B."/>
            <person name="Weltjens I."/>
            <person name="Vanstreels E."/>
            <person name="Rieger M."/>
            <person name="Schaefer M."/>
            <person name="Mueller-Auer S."/>
            <person name="Gabel C."/>
            <person name="Fuchs M."/>
            <person name="Duesterhoeft A."/>
            <person name="Fritzc C."/>
            <person name="Holzer E."/>
            <person name="Moestl D."/>
            <person name="Hilbert H."/>
            <person name="Borzym K."/>
            <person name="Langer I."/>
            <person name="Beck A."/>
            <person name="Lehrach H."/>
            <person name="Reinhardt R."/>
            <person name="Pohl T.M."/>
            <person name="Eger P."/>
            <person name="Zimmermann W."/>
            <person name="Wedler H."/>
            <person name="Wambutt R."/>
            <person name="Purnelle B."/>
            <person name="Goffeau A."/>
            <person name="Cadieu E."/>
            <person name="Dreano S."/>
            <person name="Gloux S."/>
            <person name="Lelaure V."/>
            <person name="Mottier S."/>
            <person name="Galibert F."/>
            <person name="Aves S.J."/>
            <person name="Xiang Z."/>
            <person name="Hunt C."/>
            <person name="Moore K."/>
            <person name="Hurst S.M."/>
            <person name="Lucas M."/>
            <person name="Rochet M."/>
            <person name="Gaillardin C."/>
            <person name="Tallada V.A."/>
            <person name="Garzon A."/>
            <person name="Thode G."/>
            <person name="Daga R.R."/>
            <person name="Cruzado L."/>
            <person name="Jimenez J."/>
            <person name="Sanchez M."/>
            <person name="del Rey F."/>
            <person name="Benito J."/>
            <person name="Dominguez A."/>
            <person name="Revuelta J.L."/>
            <person name="Moreno S."/>
            <person name="Armstrong J."/>
            <person name="Forsburg S.L."/>
            <person name="Cerutti L."/>
            <person name="Lowe T."/>
            <person name="McCombie W.R."/>
            <person name="Paulsen I."/>
            <person name="Potashkin J."/>
            <person name="Shpakovski G.V."/>
            <person name="Ussery D."/>
            <person name="Barrell B.G."/>
            <person name="Nurse P."/>
        </authorList>
    </citation>
    <scope>NUCLEOTIDE SEQUENCE [LARGE SCALE GENOMIC DNA]</scope>
    <source>
        <strain>972 / ATCC 24843</strain>
    </source>
</reference>
<reference key="2">
    <citation type="journal article" date="1997" name="DNA Res.">
        <title>Identification of open reading frames in Schizosaccharomyces pombe cDNAs.</title>
        <authorList>
            <person name="Yoshioka S."/>
            <person name="Kato K."/>
            <person name="Nakai K."/>
            <person name="Okayama H."/>
            <person name="Nojima H."/>
        </authorList>
    </citation>
    <scope>NUCLEOTIDE SEQUENCE [LARGE SCALE MRNA] OF 109-390</scope>
    <source>
        <strain>PR745</strain>
    </source>
</reference>
<reference key="3">
    <citation type="journal article" date="1999" name="Nucleic Acids Res.">
        <title>Taz1p and Teb1p, two telobox proteins in Schizosaccharomyces pombe, recognize different telomere-related DNA sequences.</title>
        <authorList>
            <person name="Vassetzky N.S."/>
            <person name="Gaden F."/>
            <person name="Brun C."/>
            <person name="Gasser S.M."/>
            <person name="Gilson E."/>
        </authorList>
    </citation>
    <scope>FUNCTION</scope>
    <scope>DNA-BINDING</scope>
</reference>
<reference key="4">
    <citation type="journal article" date="2000" name="Nucleic Acids Res.">
        <title>Sequence-specific binding of Taz1p dimers to fission yeast telomeric DNA.</title>
        <authorList>
            <person name="Spink K.G."/>
            <person name="Evans R.J."/>
            <person name="Chambers A."/>
        </authorList>
    </citation>
    <scope>FUNCTION</scope>
    <scope>DNA-BINDING</scope>
</reference>
<reference key="5">
    <citation type="journal article" date="2005" name="Curr. Biol.">
        <title>A large-scale screen in S. pombe identifies seven novel genes required for critical meiotic events.</title>
        <authorList>
            <person name="Martin-Castellanos C."/>
            <person name="Blanco M."/>
            <person name="Rozalen A.E."/>
            <person name="Perez-Hidalgo L."/>
            <person name="Garcia A.I."/>
            <person name="Conde F."/>
            <person name="Mata J."/>
            <person name="Ellermeier C."/>
            <person name="Davis L."/>
            <person name="San-Segundo P."/>
            <person name="Smith G.R."/>
            <person name="Moreno S."/>
        </authorList>
    </citation>
    <scope>DISRUPTION PHENOTYPE</scope>
</reference>
<reference key="6">
    <citation type="journal article" date="2006" name="Nat. Biotechnol.">
        <title>ORFeome cloning and global analysis of protein localization in the fission yeast Schizosaccharomyces pombe.</title>
        <authorList>
            <person name="Matsuyama A."/>
            <person name="Arai R."/>
            <person name="Yashiroda Y."/>
            <person name="Shirai A."/>
            <person name="Kamata A."/>
            <person name="Sekido S."/>
            <person name="Kobayashi Y."/>
            <person name="Hashimoto A."/>
            <person name="Hamamoto M."/>
            <person name="Hiraoka Y."/>
            <person name="Horinouchi S."/>
            <person name="Yoshida M."/>
        </authorList>
    </citation>
    <scope>SUBCELLULAR LOCATION [LARGE SCALE ANALYSIS]</scope>
</reference>
<reference key="7">
    <citation type="journal article" date="2013" name="EMBO J.">
        <title>Myb-domain protein Teb1 controls histone levels and centromere assembly in fission yeast.</title>
        <authorList>
            <person name="Valente L.P."/>
            <person name="Dehe P.M."/>
            <person name="Klutstein M."/>
            <person name="Aligianni S."/>
            <person name="Watt S."/>
            <person name="Baehler J."/>
            <person name="Cooper J.P."/>
        </authorList>
    </citation>
    <scope>SUBCELLULAR LOCATION</scope>
    <scope>FUNCTION</scope>
    <scope>DNA-BINDING</scope>
</reference>
<evidence type="ECO:0000255" key="1">
    <source>
        <dbReference type="PROSITE-ProRule" id="PRU00625"/>
    </source>
</evidence>
<evidence type="ECO:0000256" key="2">
    <source>
        <dbReference type="SAM" id="MobiDB-lite"/>
    </source>
</evidence>
<evidence type="ECO:0000269" key="3">
    <source>
    </source>
</evidence>
<evidence type="ECO:0000269" key="4">
    <source>
    </source>
</evidence>
<evidence type="ECO:0000269" key="5">
    <source>
    </source>
</evidence>
<evidence type="ECO:0000269" key="6">
    <source>
    </source>
</evidence>
<evidence type="ECO:0000269" key="7">
    <source>
    </source>
</evidence>
<evidence type="ECO:0000303" key="8">
    <source>
    </source>
</evidence>
<evidence type="ECO:0000303" key="9">
    <source>
    </source>
</evidence>
<evidence type="ECO:0000303" key="10">
    <source>
    </source>
</evidence>
<evidence type="ECO:0000305" key="11"/>
<evidence type="ECO:0000312" key="12">
    <source>
        <dbReference type="PomBase" id="SPAC13G7.10"/>
    </source>
</evidence>
<comment type="function">
    <text evidence="3 4 7">General transcription factor with prominent roles in controlling histone levels and stability. Binds and regulates the activities of many promoters, including those controlling the expression of all four types of canonical histones. Is also involved in the centromeric loading of cnp1 and maintenance of centromere identity. Moreover, regulates the expression of cdc2, a protease capable of histone clipping.</text>
</comment>
<comment type="subcellular location">
    <subcellularLocation>
        <location evidence="1 6 7">Nucleus</location>
    </subcellularLocation>
</comment>
<comment type="disruption phenotype">
    <text evidence="5">Leads to lethality.</text>
</comment>
<comment type="caution">
    <text evidence="3 4">Was initially reported as a potential telomeric factor as it harbors two helix-loop-helix dsDNA binding domains which are recurrently found in telomeric proteins. However, teb1 was shown to have higher affinity for the vertebrate telomere repeat, TTAGGG, than to fission yeast telomere repeats in vitro.</text>
</comment>
<name>TEB1_SCHPO</name>
<organism>
    <name type="scientific">Schizosaccharomyces pombe (strain 972 / ATCC 24843)</name>
    <name type="common">Fission yeast</name>
    <dbReference type="NCBI Taxonomy" id="284812"/>
    <lineage>
        <taxon>Eukaryota</taxon>
        <taxon>Fungi</taxon>
        <taxon>Dikarya</taxon>
        <taxon>Ascomycota</taxon>
        <taxon>Taphrinomycotina</taxon>
        <taxon>Schizosaccharomycetes</taxon>
        <taxon>Schizosaccharomycetales</taxon>
        <taxon>Schizosaccharomycetaceae</taxon>
        <taxon>Schizosaccharomyces</taxon>
    </lineage>
</organism>
<sequence>MRSMKPPGFSSDLMDEHSVDLLNGSILAAENPSKREVAQDVPGFERKPTKVRKPRVKWTEKETNDLLRGCQIHGVGNWKKILLDERFHFTNRSPNDLKDRFRTILPEDYKKFYPNAKTHMGRPQKIPHTVGLSKSTRKERKQFTPEEDERLLEGFFLHGPCWTRISKDANLGLQNRRSTDLRDRFRNAFPERYAAAGFKLKNNPGNRSKYYQNNMVNDATTPNDSSTTEAAAAAVAAVAAVAASNPNASPQQTTEQPASDELLDWPHHNLPSQFFTSQRNPNYSTDSFLLGQSLSDPFNHTLQSFHPYESLFSAGQPPSLPISPSTSQNSVQPFPFSIQQPPLHLEPPLSSNTLNSSTLPQPNSTDFNTFPPLPSTPRISSEDIPWDNRG</sequence>
<accession>Q10274</accession>
<accession>P78793</accession>
<keyword id="KW-0539">Nucleus</keyword>
<keyword id="KW-1185">Reference proteome</keyword>
<keyword id="KW-0677">Repeat</keyword>
<keyword id="KW-0804">Transcription</keyword>
<keyword id="KW-0805">Transcription regulation</keyword>
<dbReference type="EMBL" id="CU329670">
    <property type="protein sequence ID" value="CAA93598.1"/>
    <property type="molecule type" value="Genomic_DNA"/>
</dbReference>
<dbReference type="EMBL" id="D89142">
    <property type="protein sequence ID" value="BAA13804.1"/>
    <property type="molecule type" value="mRNA"/>
</dbReference>
<dbReference type="PIR" id="T37660">
    <property type="entry name" value="S67439"/>
</dbReference>
<dbReference type="RefSeq" id="NP_593712.1">
    <property type="nucleotide sequence ID" value="NM_001019143.2"/>
</dbReference>
<dbReference type="SMR" id="Q10274"/>
<dbReference type="BioGRID" id="279267">
    <property type="interactions" value="1"/>
</dbReference>
<dbReference type="STRING" id="284812.Q10274"/>
<dbReference type="iPTMnet" id="Q10274"/>
<dbReference type="PaxDb" id="4896-SPAC13G7.10.1"/>
<dbReference type="EnsemblFungi" id="SPAC13G7.10.1">
    <property type="protein sequence ID" value="SPAC13G7.10.1:pep"/>
    <property type="gene ID" value="SPAC13G7.10"/>
</dbReference>
<dbReference type="GeneID" id="2542820"/>
<dbReference type="KEGG" id="spo:2542820"/>
<dbReference type="PomBase" id="SPAC13G7.10">
    <property type="gene designation" value="teb1"/>
</dbReference>
<dbReference type="VEuPathDB" id="FungiDB:SPAC13G7.10"/>
<dbReference type="eggNOG" id="ENOG502S225">
    <property type="taxonomic scope" value="Eukaryota"/>
</dbReference>
<dbReference type="HOGENOM" id="CLU_708153_0_0_1"/>
<dbReference type="InParanoid" id="Q10274"/>
<dbReference type="OMA" id="CWTRISK"/>
<dbReference type="Reactome" id="R-SPO-174437">
    <property type="pathway name" value="Removal of the Flap Intermediate from the C-strand"/>
</dbReference>
<dbReference type="PRO" id="PR:Q10274"/>
<dbReference type="Proteomes" id="UP000002485">
    <property type="component" value="Chromosome I"/>
</dbReference>
<dbReference type="GO" id="GO:0000785">
    <property type="term" value="C:chromatin"/>
    <property type="evidence" value="ECO:0000314"/>
    <property type="project" value="PomBase"/>
</dbReference>
<dbReference type="GO" id="GO:0005634">
    <property type="term" value="C:nucleus"/>
    <property type="evidence" value="ECO:0000314"/>
    <property type="project" value="PomBase"/>
</dbReference>
<dbReference type="GO" id="GO:0001228">
    <property type="term" value="F:DNA-binding transcription activator activity, RNA polymerase II-specific"/>
    <property type="evidence" value="ECO:0000314"/>
    <property type="project" value="PomBase"/>
</dbReference>
<dbReference type="GO" id="GO:0000977">
    <property type="term" value="F:RNA polymerase II transcription regulatory region sequence-specific DNA binding"/>
    <property type="evidence" value="ECO:0000314"/>
    <property type="project" value="PomBase"/>
</dbReference>
<dbReference type="GO" id="GO:0043565">
    <property type="term" value="F:sequence-specific DNA binding"/>
    <property type="evidence" value="ECO:0000314"/>
    <property type="project" value="PomBase"/>
</dbReference>
<dbReference type="GO" id="GO:0003712">
    <property type="term" value="F:transcription coregulator activity"/>
    <property type="evidence" value="ECO:0000269"/>
    <property type="project" value="PomBase"/>
</dbReference>
<dbReference type="GO" id="GO:0006357">
    <property type="term" value="P:regulation of transcription by RNA polymerase II"/>
    <property type="evidence" value="ECO:0000269"/>
    <property type="project" value="PomBase"/>
</dbReference>
<dbReference type="CDD" id="cd11660">
    <property type="entry name" value="SANT_TRF"/>
    <property type="match status" value="2"/>
</dbReference>
<dbReference type="FunFam" id="1.10.10.60:FF:000500">
    <property type="entry name" value="Telomeric repeat-binding factor a"/>
    <property type="match status" value="1"/>
</dbReference>
<dbReference type="Gene3D" id="1.10.10.60">
    <property type="entry name" value="Homeodomain-like"/>
    <property type="match status" value="2"/>
</dbReference>
<dbReference type="InterPro" id="IPR009057">
    <property type="entry name" value="Homeodomain-like_sf"/>
</dbReference>
<dbReference type="InterPro" id="IPR017930">
    <property type="entry name" value="Myb_dom"/>
</dbReference>
<dbReference type="InterPro" id="IPR001005">
    <property type="entry name" value="SANT/Myb"/>
</dbReference>
<dbReference type="InterPro" id="IPR052450">
    <property type="entry name" value="TRBD-Containing_Protein"/>
</dbReference>
<dbReference type="PANTHER" id="PTHR46734:SF1">
    <property type="entry name" value="TELOMERIC REPEAT-BINDING FACTOR 1"/>
    <property type="match status" value="1"/>
</dbReference>
<dbReference type="PANTHER" id="PTHR46734">
    <property type="entry name" value="TELOMERIC REPEAT-BINDING FACTOR 1 TERF1"/>
    <property type="match status" value="1"/>
</dbReference>
<dbReference type="Pfam" id="PF00249">
    <property type="entry name" value="Myb_DNA-binding"/>
    <property type="match status" value="2"/>
</dbReference>
<dbReference type="SMART" id="SM00717">
    <property type="entry name" value="SANT"/>
    <property type="match status" value="2"/>
</dbReference>
<dbReference type="SUPFAM" id="SSF46689">
    <property type="entry name" value="Homeodomain-like"/>
    <property type="match status" value="2"/>
</dbReference>
<dbReference type="PROSITE" id="PS51294">
    <property type="entry name" value="HTH_MYB"/>
    <property type="match status" value="2"/>
</dbReference>
<feature type="chain" id="PRO_0000197147" description="Telobox protein 1">
    <location>
        <begin position="1"/>
        <end position="390"/>
    </location>
</feature>
<feature type="domain" description="HTH myb-type 1" evidence="1">
    <location>
        <begin position="50"/>
        <end position="109"/>
    </location>
</feature>
<feature type="domain" description="HTH myb-type 2" evidence="1">
    <location>
        <begin position="135"/>
        <end position="193"/>
    </location>
</feature>
<feature type="DNA-binding region" description="H-T-H motif" evidence="1">
    <location>
        <begin position="78"/>
        <end position="105"/>
    </location>
</feature>
<feature type="DNA-binding region" description="H-T-H motif" evidence="1">
    <location>
        <begin position="162"/>
        <end position="189"/>
    </location>
</feature>
<feature type="region of interest" description="Disordered" evidence="2">
    <location>
        <begin position="30"/>
        <end position="57"/>
    </location>
</feature>
<feature type="region of interest" description="Disordered" evidence="2">
    <location>
        <begin position="115"/>
        <end position="143"/>
    </location>
</feature>
<feature type="region of interest" description="Disordered" evidence="2">
    <location>
        <begin position="244"/>
        <end position="278"/>
    </location>
</feature>
<feature type="region of interest" description="Disordered" evidence="2">
    <location>
        <begin position="316"/>
        <end position="390"/>
    </location>
</feature>
<feature type="compositionally biased region" description="Basic and acidic residues" evidence="2">
    <location>
        <begin position="32"/>
        <end position="48"/>
    </location>
</feature>
<feature type="compositionally biased region" description="Polar residues" evidence="2">
    <location>
        <begin position="244"/>
        <end position="257"/>
    </location>
</feature>
<feature type="compositionally biased region" description="Polar residues" evidence="2">
    <location>
        <begin position="322"/>
        <end position="340"/>
    </location>
</feature>
<feature type="compositionally biased region" description="Low complexity" evidence="2">
    <location>
        <begin position="347"/>
        <end position="360"/>
    </location>
</feature>
<feature type="sequence conflict" description="In Ref. 2; BAA13804." evidence="11" ref="2">
    <original>F</original>
    <variation>V</variation>
    <location>
        <position position="312"/>
    </location>
</feature>
<protein>
    <recommendedName>
        <fullName evidence="8">Telobox protein 1</fullName>
    </recommendedName>
    <alternativeName>
        <fullName evidence="10">Meiotically up-regulated gene 152 protein</fullName>
    </alternativeName>
</protein>
<proteinExistence type="evidence at protein level"/>
<gene>
    <name evidence="8" type="primary">teb1</name>
    <name evidence="10" type="synonym">mug152</name>
    <name evidence="9" type="synonym">spX</name>
    <name evidence="12" type="ORF">SPAC13G7.10</name>
</gene>